<comment type="function">
    <text evidence="2">Cell wall formation.</text>
</comment>
<comment type="catalytic activity">
    <reaction evidence="2">
        <text>2 D-alanine + ATP = D-alanyl-D-alanine + ADP + phosphate + H(+)</text>
        <dbReference type="Rhea" id="RHEA:11224"/>
        <dbReference type="ChEBI" id="CHEBI:15378"/>
        <dbReference type="ChEBI" id="CHEBI:30616"/>
        <dbReference type="ChEBI" id="CHEBI:43474"/>
        <dbReference type="ChEBI" id="CHEBI:57416"/>
        <dbReference type="ChEBI" id="CHEBI:57822"/>
        <dbReference type="ChEBI" id="CHEBI:456216"/>
        <dbReference type="EC" id="6.3.2.4"/>
    </reaction>
</comment>
<comment type="cofactor">
    <cofactor evidence="1">
        <name>Mg(2+)</name>
        <dbReference type="ChEBI" id="CHEBI:18420"/>
    </cofactor>
    <cofactor evidence="1">
        <name>Mn(2+)</name>
        <dbReference type="ChEBI" id="CHEBI:29035"/>
    </cofactor>
    <text evidence="1">Binds 2 magnesium or manganese ions per subunit.</text>
</comment>
<comment type="pathway">
    <text evidence="2">Cell wall biogenesis; peptidoglycan biosynthesis.</text>
</comment>
<comment type="subcellular location">
    <subcellularLocation>
        <location evidence="2">Cytoplasm</location>
    </subcellularLocation>
</comment>
<comment type="similarity">
    <text evidence="2">Belongs to the D-alanine--D-alanine ligase family.</text>
</comment>
<reference key="1">
    <citation type="journal article" date="2007" name="PLoS Genet.">
        <title>Patterns and implications of gene gain and loss in the evolution of Prochlorococcus.</title>
        <authorList>
            <person name="Kettler G.C."/>
            <person name="Martiny A.C."/>
            <person name="Huang K."/>
            <person name="Zucker J."/>
            <person name="Coleman M.L."/>
            <person name="Rodrigue S."/>
            <person name="Chen F."/>
            <person name="Lapidus A."/>
            <person name="Ferriera S."/>
            <person name="Johnson J."/>
            <person name="Steglich C."/>
            <person name="Church G.M."/>
            <person name="Richardson P."/>
            <person name="Chisholm S.W."/>
        </authorList>
    </citation>
    <scope>NUCLEOTIDE SEQUENCE [LARGE SCALE GENOMIC DNA]</scope>
    <source>
        <strain>AS9601</strain>
    </source>
</reference>
<sequence>MIGGKKKCIGLIFGGNSNEHEVSISSAKTVFQAFKSEINKERFTIRAFYINKYGDWLDSDSSEKILIDESKNKNTTKKQIFNQEKINFLDGVDFQNVDVWFPLLHGINGEDGSIHGLLRFTKKPLVGCGIIGSALGMDKILMKIIFSNLKIPQVNYLVFQNQDLNDEEVKNKLIHEILKKLNFPVFVKPSNSGSSLGISKVINKSEIIPALEKARGIDPSILIEEGLEVREIECGIIGNSKLLTSEIGEVNYKSDWYDYNSKYHSNNKIIIPAEIDSKISKEIKEIAIKSCRALNIFGFARVDFFLEKSSNKIFLNEINTIPGFTKNSMFPMLWKASGLKIEQLVAKLVDISLDL</sequence>
<gene>
    <name evidence="2" type="primary">ddl</name>
    <name type="ordered locus">A9601_15051</name>
</gene>
<dbReference type="EC" id="6.3.2.4" evidence="2"/>
<dbReference type="EMBL" id="CP000551">
    <property type="protein sequence ID" value="ABM70788.1"/>
    <property type="molecule type" value="Genomic_DNA"/>
</dbReference>
<dbReference type="RefSeq" id="WP_011818924.1">
    <property type="nucleotide sequence ID" value="NC_008816.1"/>
</dbReference>
<dbReference type="SMR" id="A2BSM7"/>
<dbReference type="STRING" id="146891.A9601_15051"/>
<dbReference type="KEGG" id="pmb:A9601_15051"/>
<dbReference type="eggNOG" id="COG1181">
    <property type="taxonomic scope" value="Bacteria"/>
</dbReference>
<dbReference type="HOGENOM" id="CLU_039268_0_0_3"/>
<dbReference type="OrthoDB" id="9813261at2"/>
<dbReference type="UniPathway" id="UPA00219"/>
<dbReference type="Proteomes" id="UP000002590">
    <property type="component" value="Chromosome"/>
</dbReference>
<dbReference type="GO" id="GO:0005829">
    <property type="term" value="C:cytosol"/>
    <property type="evidence" value="ECO:0007669"/>
    <property type="project" value="TreeGrafter"/>
</dbReference>
<dbReference type="GO" id="GO:0005524">
    <property type="term" value="F:ATP binding"/>
    <property type="evidence" value="ECO:0007669"/>
    <property type="project" value="UniProtKB-KW"/>
</dbReference>
<dbReference type="GO" id="GO:0008716">
    <property type="term" value="F:D-alanine-D-alanine ligase activity"/>
    <property type="evidence" value="ECO:0007669"/>
    <property type="project" value="UniProtKB-UniRule"/>
</dbReference>
<dbReference type="GO" id="GO:0046872">
    <property type="term" value="F:metal ion binding"/>
    <property type="evidence" value="ECO:0007669"/>
    <property type="project" value="UniProtKB-KW"/>
</dbReference>
<dbReference type="GO" id="GO:0071555">
    <property type="term" value="P:cell wall organization"/>
    <property type="evidence" value="ECO:0007669"/>
    <property type="project" value="UniProtKB-KW"/>
</dbReference>
<dbReference type="GO" id="GO:0009252">
    <property type="term" value="P:peptidoglycan biosynthetic process"/>
    <property type="evidence" value="ECO:0007669"/>
    <property type="project" value="UniProtKB-UniRule"/>
</dbReference>
<dbReference type="GO" id="GO:0008360">
    <property type="term" value="P:regulation of cell shape"/>
    <property type="evidence" value="ECO:0007669"/>
    <property type="project" value="UniProtKB-KW"/>
</dbReference>
<dbReference type="Gene3D" id="3.40.50.20">
    <property type="match status" value="1"/>
</dbReference>
<dbReference type="Gene3D" id="3.30.1490.20">
    <property type="entry name" value="ATP-grasp fold, A domain"/>
    <property type="match status" value="1"/>
</dbReference>
<dbReference type="Gene3D" id="3.30.470.20">
    <property type="entry name" value="ATP-grasp fold, B domain"/>
    <property type="match status" value="1"/>
</dbReference>
<dbReference type="HAMAP" id="MF_00047">
    <property type="entry name" value="Dala_Dala_lig"/>
    <property type="match status" value="1"/>
</dbReference>
<dbReference type="InterPro" id="IPR011761">
    <property type="entry name" value="ATP-grasp"/>
</dbReference>
<dbReference type="InterPro" id="IPR013815">
    <property type="entry name" value="ATP_grasp_subdomain_1"/>
</dbReference>
<dbReference type="InterPro" id="IPR000291">
    <property type="entry name" value="D-Ala_lig_Van_CS"/>
</dbReference>
<dbReference type="InterPro" id="IPR005905">
    <property type="entry name" value="D_ala_D_ala"/>
</dbReference>
<dbReference type="InterPro" id="IPR011095">
    <property type="entry name" value="Dala_Dala_lig_C"/>
</dbReference>
<dbReference type="InterPro" id="IPR011127">
    <property type="entry name" value="Dala_Dala_lig_N"/>
</dbReference>
<dbReference type="InterPro" id="IPR016185">
    <property type="entry name" value="PreATP-grasp_dom_sf"/>
</dbReference>
<dbReference type="NCBIfam" id="TIGR01205">
    <property type="entry name" value="D_ala_D_alaTIGR"/>
    <property type="match status" value="1"/>
</dbReference>
<dbReference type="NCBIfam" id="NF002528">
    <property type="entry name" value="PRK01966.1-4"/>
    <property type="match status" value="1"/>
</dbReference>
<dbReference type="PANTHER" id="PTHR23132">
    <property type="entry name" value="D-ALANINE--D-ALANINE LIGASE"/>
    <property type="match status" value="1"/>
</dbReference>
<dbReference type="PANTHER" id="PTHR23132:SF25">
    <property type="entry name" value="D-ALANINE--D-ALANINE LIGASE A"/>
    <property type="match status" value="1"/>
</dbReference>
<dbReference type="Pfam" id="PF07478">
    <property type="entry name" value="Dala_Dala_lig_C"/>
    <property type="match status" value="1"/>
</dbReference>
<dbReference type="Pfam" id="PF01820">
    <property type="entry name" value="Dala_Dala_lig_N"/>
    <property type="match status" value="1"/>
</dbReference>
<dbReference type="PIRSF" id="PIRSF039102">
    <property type="entry name" value="Ddl/VanB"/>
    <property type="match status" value="1"/>
</dbReference>
<dbReference type="SUPFAM" id="SSF56059">
    <property type="entry name" value="Glutathione synthetase ATP-binding domain-like"/>
    <property type="match status" value="1"/>
</dbReference>
<dbReference type="SUPFAM" id="SSF52440">
    <property type="entry name" value="PreATP-grasp domain"/>
    <property type="match status" value="1"/>
</dbReference>
<dbReference type="PROSITE" id="PS50975">
    <property type="entry name" value="ATP_GRASP"/>
    <property type="match status" value="1"/>
</dbReference>
<dbReference type="PROSITE" id="PS00843">
    <property type="entry name" value="DALA_DALA_LIGASE_1"/>
    <property type="match status" value="1"/>
</dbReference>
<dbReference type="PROSITE" id="PS00844">
    <property type="entry name" value="DALA_DALA_LIGASE_2"/>
    <property type="match status" value="1"/>
</dbReference>
<accession>A2BSM7</accession>
<proteinExistence type="inferred from homology"/>
<organism>
    <name type="scientific">Prochlorococcus marinus (strain AS9601)</name>
    <dbReference type="NCBI Taxonomy" id="146891"/>
    <lineage>
        <taxon>Bacteria</taxon>
        <taxon>Bacillati</taxon>
        <taxon>Cyanobacteriota</taxon>
        <taxon>Cyanophyceae</taxon>
        <taxon>Synechococcales</taxon>
        <taxon>Prochlorococcaceae</taxon>
        <taxon>Prochlorococcus</taxon>
    </lineage>
</organism>
<evidence type="ECO:0000250" key="1"/>
<evidence type="ECO:0000255" key="2">
    <source>
        <dbReference type="HAMAP-Rule" id="MF_00047"/>
    </source>
</evidence>
<feature type="chain" id="PRO_1000030483" description="D-alanine--D-alanine ligase">
    <location>
        <begin position="1"/>
        <end position="355"/>
    </location>
</feature>
<feature type="domain" description="ATP-grasp" evidence="2">
    <location>
        <begin position="143"/>
        <end position="350"/>
    </location>
</feature>
<feature type="binding site" evidence="2">
    <location>
        <begin position="178"/>
        <end position="233"/>
    </location>
    <ligand>
        <name>ATP</name>
        <dbReference type="ChEBI" id="CHEBI:30616"/>
    </ligand>
</feature>
<feature type="binding site" evidence="2">
    <location>
        <position position="303"/>
    </location>
    <ligand>
        <name>Mg(2+)</name>
        <dbReference type="ChEBI" id="CHEBI:18420"/>
        <label>1</label>
    </ligand>
</feature>
<feature type="binding site" evidence="2">
    <location>
        <position position="317"/>
    </location>
    <ligand>
        <name>Mg(2+)</name>
        <dbReference type="ChEBI" id="CHEBI:18420"/>
        <label>1</label>
    </ligand>
</feature>
<feature type="binding site" evidence="2">
    <location>
        <position position="317"/>
    </location>
    <ligand>
        <name>Mg(2+)</name>
        <dbReference type="ChEBI" id="CHEBI:18420"/>
        <label>2</label>
    </ligand>
</feature>
<feature type="binding site" evidence="2">
    <location>
        <position position="319"/>
    </location>
    <ligand>
        <name>Mg(2+)</name>
        <dbReference type="ChEBI" id="CHEBI:18420"/>
        <label>2</label>
    </ligand>
</feature>
<keyword id="KW-0067">ATP-binding</keyword>
<keyword id="KW-0133">Cell shape</keyword>
<keyword id="KW-0961">Cell wall biogenesis/degradation</keyword>
<keyword id="KW-0963">Cytoplasm</keyword>
<keyword id="KW-0436">Ligase</keyword>
<keyword id="KW-0460">Magnesium</keyword>
<keyword id="KW-0464">Manganese</keyword>
<keyword id="KW-0479">Metal-binding</keyword>
<keyword id="KW-0547">Nucleotide-binding</keyword>
<keyword id="KW-0573">Peptidoglycan synthesis</keyword>
<name>DDL_PROMS</name>
<protein>
    <recommendedName>
        <fullName evidence="2">D-alanine--D-alanine ligase</fullName>
        <ecNumber evidence="2">6.3.2.4</ecNumber>
    </recommendedName>
    <alternativeName>
        <fullName evidence="2">D-Ala-D-Ala ligase</fullName>
    </alternativeName>
    <alternativeName>
        <fullName evidence="2">D-alanylalanine synthetase</fullName>
    </alternativeName>
</protein>